<sequence>MDSVSNVSVNEQGKFNDKEEGFSNLKSLKHVSHSETDFEVSNDEDNQLLELGYKPVFKREFSTWATFSFAFSISGLFATVVTTYSYPLISGGAPSAVWCWLIAGAGCMCIALSVAELVSAYPTSGGLYFTCKDLVPARSMPVVAWVVGWLNLLGQAAGVSSTDWSCAQLLLAAVSISTDLKYIPTNQHIVGVMAAVIVFHGLVNSLSTRWLDRITRFYATFHLIVLVVCMICLLAKCPKFNTGKYVFTDVQASSGWHPIGFSFLFGFLSVAWCMTDYDATAHIAEEIENAAVRAPNAIALALSITYVLGWVFNIVLAFTMGTDLDSLINSELGQPVAQIFYNVLGKKGSMAFTILSFIIINFTGITAMQANARTIWAFSRDQALPFSRYWYKINKTTTTPVIAVWLNVVFCIALNLIGLGSIEAIEAIFSVCAIALDWSYVIPIACKLIFGKRLNYKPGPWNLGWASHFVNAYAVCWTAFVSVIFLMPTVRPVTPQNMNYAVVVLAGVLLFSLVYWWSGARKSYIGPRINVDMESEDPFKTE</sequence>
<accession>O60113</accession>
<comment type="subcellular location">
    <subcellularLocation>
        <location evidence="2">Golgi apparatus</location>
    </subcellularLocation>
    <subcellularLocation>
        <location evidence="1">Membrane</location>
        <topology evidence="1">Multi-pass membrane protein</topology>
    </subcellularLocation>
    <text evidence="1 2">Barrier septum. Cell tip.</text>
</comment>
<comment type="similarity">
    <text evidence="1">Belongs to the amino acid-polyamine-organocation (APC) superfamily.</text>
</comment>
<reference evidence="4" key="1">
    <citation type="journal article" date="2002" name="Nature">
        <title>The genome sequence of Schizosaccharomyces pombe.</title>
        <authorList>
            <person name="Wood V."/>
            <person name="Gwilliam R."/>
            <person name="Rajandream M.A."/>
            <person name="Lyne M.H."/>
            <person name="Lyne R."/>
            <person name="Stewart A."/>
            <person name="Sgouros J.G."/>
            <person name="Peat N."/>
            <person name="Hayles J."/>
            <person name="Baker S.G."/>
            <person name="Basham D."/>
            <person name="Bowman S."/>
            <person name="Brooks K."/>
            <person name="Brown D."/>
            <person name="Brown S."/>
            <person name="Chillingworth T."/>
            <person name="Churcher C.M."/>
            <person name="Collins M."/>
            <person name="Connor R."/>
            <person name="Cronin A."/>
            <person name="Davis P."/>
            <person name="Feltwell T."/>
            <person name="Fraser A."/>
            <person name="Gentles S."/>
            <person name="Goble A."/>
            <person name="Hamlin N."/>
            <person name="Harris D.E."/>
            <person name="Hidalgo J."/>
            <person name="Hodgson G."/>
            <person name="Holroyd S."/>
            <person name="Hornsby T."/>
            <person name="Howarth S."/>
            <person name="Huckle E.J."/>
            <person name="Hunt S."/>
            <person name="Jagels K."/>
            <person name="James K.D."/>
            <person name="Jones L."/>
            <person name="Jones M."/>
            <person name="Leather S."/>
            <person name="McDonald S."/>
            <person name="McLean J."/>
            <person name="Mooney P."/>
            <person name="Moule S."/>
            <person name="Mungall K.L."/>
            <person name="Murphy L.D."/>
            <person name="Niblett D."/>
            <person name="Odell C."/>
            <person name="Oliver K."/>
            <person name="O'Neil S."/>
            <person name="Pearson D."/>
            <person name="Quail M.A."/>
            <person name="Rabbinowitsch E."/>
            <person name="Rutherford K.M."/>
            <person name="Rutter S."/>
            <person name="Saunders D."/>
            <person name="Seeger K."/>
            <person name="Sharp S."/>
            <person name="Skelton J."/>
            <person name="Simmonds M.N."/>
            <person name="Squares R."/>
            <person name="Squares S."/>
            <person name="Stevens K."/>
            <person name="Taylor K."/>
            <person name="Taylor R.G."/>
            <person name="Tivey A."/>
            <person name="Walsh S.V."/>
            <person name="Warren T."/>
            <person name="Whitehead S."/>
            <person name="Woodward J.R."/>
            <person name="Volckaert G."/>
            <person name="Aert R."/>
            <person name="Robben J."/>
            <person name="Grymonprez B."/>
            <person name="Weltjens I."/>
            <person name="Vanstreels E."/>
            <person name="Rieger M."/>
            <person name="Schaefer M."/>
            <person name="Mueller-Auer S."/>
            <person name="Gabel C."/>
            <person name="Fuchs M."/>
            <person name="Duesterhoeft A."/>
            <person name="Fritzc C."/>
            <person name="Holzer E."/>
            <person name="Moestl D."/>
            <person name="Hilbert H."/>
            <person name="Borzym K."/>
            <person name="Langer I."/>
            <person name="Beck A."/>
            <person name="Lehrach H."/>
            <person name="Reinhardt R."/>
            <person name="Pohl T.M."/>
            <person name="Eger P."/>
            <person name="Zimmermann W."/>
            <person name="Wedler H."/>
            <person name="Wambutt R."/>
            <person name="Purnelle B."/>
            <person name="Goffeau A."/>
            <person name="Cadieu E."/>
            <person name="Dreano S."/>
            <person name="Gloux S."/>
            <person name="Lelaure V."/>
            <person name="Mottier S."/>
            <person name="Galibert F."/>
            <person name="Aves S.J."/>
            <person name="Xiang Z."/>
            <person name="Hunt C."/>
            <person name="Moore K."/>
            <person name="Hurst S.M."/>
            <person name="Lucas M."/>
            <person name="Rochet M."/>
            <person name="Gaillardin C."/>
            <person name="Tallada V.A."/>
            <person name="Garzon A."/>
            <person name="Thode G."/>
            <person name="Daga R.R."/>
            <person name="Cruzado L."/>
            <person name="Jimenez J."/>
            <person name="Sanchez M."/>
            <person name="del Rey F."/>
            <person name="Benito J."/>
            <person name="Dominguez A."/>
            <person name="Revuelta J.L."/>
            <person name="Moreno S."/>
            <person name="Armstrong J."/>
            <person name="Forsburg S.L."/>
            <person name="Cerutti L."/>
            <person name="Lowe T."/>
            <person name="McCombie W.R."/>
            <person name="Paulsen I."/>
            <person name="Potashkin J."/>
            <person name="Shpakovski G.V."/>
            <person name="Ussery D."/>
            <person name="Barrell B.G."/>
            <person name="Nurse P."/>
        </authorList>
    </citation>
    <scope>NUCLEOTIDE SEQUENCE [LARGE SCALE GENOMIC DNA]</scope>
    <source>
        <strain>972 / ATCC 24843</strain>
    </source>
</reference>
<reference evidence="3" key="2">
    <citation type="journal article" date="2006" name="Nat. Biotechnol.">
        <title>ORFeome cloning and global analysis of protein localization in the fission yeast Schizosaccharomyces pombe.</title>
        <authorList>
            <person name="Matsuyama A."/>
            <person name="Arai R."/>
            <person name="Yashiroda Y."/>
            <person name="Shirai A."/>
            <person name="Kamata A."/>
            <person name="Sekido S."/>
            <person name="Kobayashi Y."/>
            <person name="Hashimoto A."/>
            <person name="Hamamoto M."/>
            <person name="Hiraoka Y."/>
            <person name="Horinouchi S."/>
            <person name="Yoshida M."/>
        </authorList>
    </citation>
    <scope>SUBCELLULAR LOCATION [LARGE SCALE ANALYSIS]</scope>
</reference>
<keyword id="KW-0029">Amino-acid transport</keyword>
<keyword id="KW-0325">Glycoprotein</keyword>
<keyword id="KW-0333">Golgi apparatus</keyword>
<keyword id="KW-0472">Membrane</keyword>
<keyword id="KW-1185">Reference proteome</keyword>
<keyword id="KW-0812">Transmembrane</keyword>
<keyword id="KW-1133">Transmembrane helix</keyword>
<keyword id="KW-0813">Transport</keyword>
<feature type="chain" id="PRO_0000310826" description="Uncharacterized amino-acid permease C15C4.04c">
    <location>
        <begin position="1"/>
        <end position="542"/>
    </location>
</feature>
<feature type="transmembrane region" description="Helical" evidence="1">
    <location>
        <begin position="61"/>
        <end position="81"/>
    </location>
</feature>
<feature type="transmembrane region" description="Helical" evidence="1">
    <location>
        <begin position="95"/>
        <end position="115"/>
    </location>
</feature>
<feature type="transmembrane region" description="Helical" evidence="1">
    <location>
        <begin position="139"/>
        <end position="159"/>
    </location>
</feature>
<feature type="transmembrane region" description="Helical" evidence="1">
    <location>
        <begin position="188"/>
        <end position="208"/>
    </location>
</feature>
<feature type="transmembrane region" description="Helical" evidence="1">
    <location>
        <begin position="217"/>
        <end position="237"/>
    </location>
</feature>
<feature type="transmembrane region" description="Helical" evidence="1">
    <location>
        <begin position="255"/>
        <end position="275"/>
    </location>
</feature>
<feature type="transmembrane region" description="Helical" evidence="1">
    <location>
        <begin position="298"/>
        <end position="318"/>
    </location>
</feature>
<feature type="transmembrane region" description="Helical" evidence="1">
    <location>
        <begin position="348"/>
        <end position="368"/>
    </location>
</feature>
<feature type="transmembrane region" description="Helical" evidence="1">
    <location>
        <begin position="402"/>
        <end position="422"/>
    </location>
</feature>
<feature type="transmembrane region" description="Helical" evidence="1">
    <location>
        <begin position="424"/>
        <end position="444"/>
    </location>
</feature>
<feature type="transmembrane region" description="Helical" evidence="1">
    <location>
        <begin position="469"/>
        <end position="489"/>
    </location>
</feature>
<feature type="transmembrane region" description="Helical" evidence="1">
    <location>
        <begin position="500"/>
        <end position="520"/>
    </location>
</feature>
<feature type="glycosylation site" description="N-linked (GlcNAc...) asparagine" evidence="1">
    <location>
        <position position="6"/>
    </location>
</feature>
<feature type="glycosylation site" description="N-linked (GlcNAc...) asparagine" evidence="1">
    <location>
        <position position="394"/>
    </location>
</feature>
<proteinExistence type="inferred from homology"/>
<evidence type="ECO:0000255" key="1"/>
<evidence type="ECO:0000269" key="2">
    <source>
    </source>
</evidence>
<evidence type="ECO:0000305" key="3"/>
<evidence type="ECO:0000312" key="4">
    <source>
        <dbReference type="EMBL" id="CAA18895.1"/>
    </source>
</evidence>
<name>YG64_SCHPO</name>
<protein>
    <recommendedName>
        <fullName>Uncharacterized amino-acid permease C15C4.04c</fullName>
    </recommendedName>
</protein>
<dbReference type="EMBL" id="CU329671">
    <property type="protein sequence ID" value="CAA18895.1"/>
    <property type="molecule type" value="Genomic_DNA"/>
</dbReference>
<dbReference type="PIR" id="T39474">
    <property type="entry name" value="T39474"/>
</dbReference>
<dbReference type="RefSeq" id="NP_595924.1">
    <property type="nucleotide sequence ID" value="NM_001021832.2"/>
</dbReference>
<dbReference type="SMR" id="O60113"/>
<dbReference type="BioGRID" id="276449">
    <property type="interactions" value="6"/>
</dbReference>
<dbReference type="FunCoup" id="O60113">
    <property type="interactions" value="23"/>
</dbReference>
<dbReference type="STRING" id="284812.O60113"/>
<dbReference type="iPTMnet" id="O60113"/>
<dbReference type="PaxDb" id="4896-SPBC15C4.04c.1"/>
<dbReference type="EnsemblFungi" id="SPBC15C4.04c.1">
    <property type="protein sequence ID" value="SPBC15C4.04c.1:pep"/>
    <property type="gene ID" value="SPBC15C4.04c"/>
</dbReference>
<dbReference type="KEGG" id="spo:2539903"/>
<dbReference type="PomBase" id="SPBC15C4.04c"/>
<dbReference type="VEuPathDB" id="FungiDB:SPBC15C4.04c"/>
<dbReference type="eggNOG" id="KOG1289">
    <property type="taxonomic scope" value="Eukaryota"/>
</dbReference>
<dbReference type="HOGENOM" id="CLU_004495_0_1_1"/>
<dbReference type="InParanoid" id="O60113"/>
<dbReference type="OMA" id="FWCIAIN"/>
<dbReference type="PhylomeDB" id="O60113"/>
<dbReference type="PRO" id="PR:O60113"/>
<dbReference type="Proteomes" id="UP000002485">
    <property type="component" value="Chromosome II"/>
</dbReference>
<dbReference type="GO" id="GO:0032153">
    <property type="term" value="C:cell division site"/>
    <property type="evidence" value="ECO:0007005"/>
    <property type="project" value="PomBase"/>
</dbReference>
<dbReference type="GO" id="GO:0051286">
    <property type="term" value="C:cell tip"/>
    <property type="evidence" value="ECO:0007005"/>
    <property type="project" value="PomBase"/>
</dbReference>
<dbReference type="GO" id="GO:0005794">
    <property type="term" value="C:Golgi apparatus"/>
    <property type="evidence" value="ECO:0007669"/>
    <property type="project" value="UniProtKB-SubCell"/>
</dbReference>
<dbReference type="GO" id="GO:0016020">
    <property type="term" value="C:membrane"/>
    <property type="evidence" value="ECO:0007669"/>
    <property type="project" value="UniProtKB-SubCell"/>
</dbReference>
<dbReference type="GO" id="GO:0015171">
    <property type="term" value="F:amino acid transmembrane transporter activity"/>
    <property type="evidence" value="ECO:0000255"/>
    <property type="project" value="PomBase"/>
</dbReference>
<dbReference type="GO" id="GO:0015185">
    <property type="term" value="F:gamma-aminobutyric acid transmembrane transporter activity"/>
    <property type="evidence" value="ECO:0000318"/>
    <property type="project" value="GO_Central"/>
</dbReference>
<dbReference type="GO" id="GO:0003333">
    <property type="term" value="P:amino acid transmembrane transport"/>
    <property type="evidence" value="ECO:0000255"/>
    <property type="project" value="PomBase"/>
</dbReference>
<dbReference type="GO" id="GO:0015812">
    <property type="term" value="P:gamma-aminobutyric acid transport"/>
    <property type="evidence" value="ECO:0000318"/>
    <property type="project" value="GO_Central"/>
</dbReference>
<dbReference type="FunFam" id="1.20.1740.10:FF:000046">
    <property type="entry name" value="Amino-acid permease, putative"/>
    <property type="match status" value="1"/>
</dbReference>
<dbReference type="Gene3D" id="1.20.1740.10">
    <property type="entry name" value="Amino acid/polyamine transporter I"/>
    <property type="match status" value="1"/>
</dbReference>
<dbReference type="InterPro" id="IPR002293">
    <property type="entry name" value="AA/rel_permease1"/>
</dbReference>
<dbReference type="InterPro" id="IPR004756">
    <property type="entry name" value="AA_permease"/>
</dbReference>
<dbReference type="InterPro" id="IPR004840">
    <property type="entry name" value="Amino_acid_permease_CS"/>
</dbReference>
<dbReference type="NCBIfam" id="TIGR00907">
    <property type="entry name" value="2A0304"/>
    <property type="match status" value="1"/>
</dbReference>
<dbReference type="PANTHER" id="PTHR45649:SF9">
    <property type="entry name" value="AMINO-ACID PERMEASE 2"/>
    <property type="match status" value="1"/>
</dbReference>
<dbReference type="PANTHER" id="PTHR45649">
    <property type="entry name" value="AMINO-ACID PERMEASE BAT1"/>
    <property type="match status" value="1"/>
</dbReference>
<dbReference type="Pfam" id="PF13520">
    <property type="entry name" value="AA_permease_2"/>
    <property type="match status" value="1"/>
</dbReference>
<dbReference type="PIRSF" id="PIRSF006060">
    <property type="entry name" value="AA_transporter"/>
    <property type="match status" value="1"/>
</dbReference>
<dbReference type="PROSITE" id="PS00218">
    <property type="entry name" value="AMINO_ACID_PERMEASE_1"/>
    <property type="match status" value="1"/>
</dbReference>
<gene>
    <name type="ORF">SPBC15C4.04c</name>
</gene>
<organism>
    <name type="scientific">Schizosaccharomyces pombe (strain 972 / ATCC 24843)</name>
    <name type="common">Fission yeast</name>
    <dbReference type="NCBI Taxonomy" id="284812"/>
    <lineage>
        <taxon>Eukaryota</taxon>
        <taxon>Fungi</taxon>
        <taxon>Dikarya</taxon>
        <taxon>Ascomycota</taxon>
        <taxon>Taphrinomycotina</taxon>
        <taxon>Schizosaccharomycetes</taxon>
        <taxon>Schizosaccharomycetales</taxon>
        <taxon>Schizosaccharomycetaceae</taxon>
        <taxon>Schizosaccharomyces</taxon>
    </lineage>
</organism>